<feature type="chain" id="PRO_1000205931" description="3-hydroxydecanoyl-[acyl-carrier-protein] dehydratase">
    <location>
        <begin position="1"/>
        <end position="171"/>
    </location>
</feature>
<feature type="active site" evidence="1">
    <location>
        <position position="70"/>
    </location>
</feature>
<sequence>MTKQHAYTREDLLRCARGELFGPGNAQLPAPNMLMVDRITHISDVGGKYGKGEMVAELDINPDLWFFACHFEGDPVMPGCLGLDAMWQLVGFYLGWQGNPGRGRALGSGEVKFFGQVLPTAKKLTYNIHIKRTISRSLILGIADGTVSVDGREIYSAEGLRVGLFTSTDSF</sequence>
<evidence type="ECO:0000255" key="1">
    <source>
        <dbReference type="HAMAP-Rule" id="MF_00405"/>
    </source>
</evidence>
<protein>
    <recommendedName>
        <fullName evidence="1">3-hydroxydecanoyl-[acyl-carrier-protein] dehydratase</fullName>
        <ecNumber evidence="1">4.2.1.59</ecNumber>
    </recommendedName>
    <alternativeName>
        <fullName evidence="1">3-hydroxyacyl-[acyl-carrier-protein] dehydratase FabA</fullName>
    </alternativeName>
    <alternativeName>
        <fullName evidence="1">Beta-hydroxydecanoyl thioester dehydrase</fullName>
    </alternativeName>
    <alternativeName>
        <fullName evidence="1">Trans-2-decenoyl-[acyl-carrier-protein] isomerase</fullName>
        <ecNumber evidence="1">5.3.3.14</ecNumber>
    </alternativeName>
</protein>
<accession>C1DLY7</accession>
<dbReference type="EC" id="4.2.1.59" evidence="1"/>
<dbReference type="EC" id="5.3.3.14" evidence="1"/>
<dbReference type="EMBL" id="CP001157">
    <property type="protein sequence ID" value="ACO79074.1"/>
    <property type="molecule type" value="Genomic_DNA"/>
</dbReference>
<dbReference type="RefSeq" id="WP_012701461.1">
    <property type="nucleotide sequence ID" value="NC_012560.1"/>
</dbReference>
<dbReference type="SMR" id="C1DLY7"/>
<dbReference type="STRING" id="322710.Avin_29050"/>
<dbReference type="EnsemblBacteria" id="ACO79074">
    <property type="protein sequence ID" value="ACO79074"/>
    <property type="gene ID" value="Avin_29050"/>
</dbReference>
<dbReference type="GeneID" id="88186011"/>
<dbReference type="KEGG" id="avn:Avin_29050"/>
<dbReference type="eggNOG" id="COG0764">
    <property type="taxonomic scope" value="Bacteria"/>
</dbReference>
<dbReference type="HOGENOM" id="CLU_097925_0_0_6"/>
<dbReference type="OrthoDB" id="9786735at2"/>
<dbReference type="UniPathway" id="UPA00094"/>
<dbReference type="Proteomes" id="UP000002424">
    <property type="component" value="Chromosome"/>
</dbReference>
<dbReference type="GO" id="GO:0005737">
    <property type="term" value="C:cytoplasm"/>
    <property type="evidence" value="ECO:0007669"/>
    <property type="project" value="UniProtKB-SubCell"/>
</dbReference>
<dbReference type="GO" id="GO:0019171">
    <property type="term" value="F:(3R)-hydroxyacyl-[acyl-carrier-protein] dehydratase activity"/>
    <property type="evidence" value="ECO:0007669"/>
    <property type="project" value="UniProtKB-UniRule"/>
</dbReference>
<dbReference type="GO" id="GO:0034017">
    <property type="term" value="F:trans-2-decenoyl-acyl-carrier-protein isomerase activity"/>
    <property type="evidence" value="ECO:0007669"/>
    <property type="project" value="UniProtKB-UniRule"/>
</dbReference>
<dbReference type="GO" id="GO:0006636">
    <property type="term" value="P:unsaturated fatty acid biosynthetic process"/>
    <property type="evidence" value="ECO:0007669"/>
    <property type="project" value="UniProtKB-UniRule"/>
</dbReference>
<dbReference type="CDD" id="cd01287">
    <property type="entry name" value="FabA"/>
    <property type="match status" value="1"/>
</dbReference>
<dbReference type="FunFam" id="3.10.129.10:FF:000003">
    <property type="entry name" value="3-hydroxydecanoyl-[acyl-carrier-protein] dehydratase"/>
    <property type="match status" value="1"/>
</dbReference>
<dbReference type="Gene3D" id="3.10.129.10">
    <property type="entry name" value="Hotdog Thioesterase"/>
    <property type="match status" value="1"/>
</dbReference>
<dbReference type="HAMAP" id="MF_00405">
    <property type="entry name" value="FabA"/>
    <property type="match status" value="1"/>
</dbReference>
<dbReference type="InterPro" id="IPR010083">
    <property type="entry name" value="FabA"/>
</dbReference>
<dbReference type="InterPro" id="IPR013114">
    <property type="entry name" value="FabA_FabZ"/>
</dbReference>
<dbReference type="InterPro" id="IPR029069">
    <property type="entry name" value="HotDog_dom_sf"/>
</dbReference>
<dbReference type="NCBIfam" id="TIGR01749">
    <property type="entry name" value="fabA"/>
    <property type="match status" value="1"/>
</dbReference>
<dbReference type="NCBIfam" id="NF003509">
    <property type="entry name" value="PRK05174.1"/>
    <property type="match status" value="1"/>
</dbReference>
<dbReference type="PANTHER" id="PTHR30272">
    <property type="entry name" value="3-HYDROXYACYL-[ACYL-CARRIER-PROTEIN] DEHYDRATASE"/>
    <property type="match status" value="1"/>
</dbReference>
<dbReference type="PANTHER" id="PTHR30272:SF8">
    <property type="entry name" value="3-HYDROXYDECANOYL-[ACYL-CARRIER-PROTEIN] DEHYDRATASE"/>
    <property type="match status" value="1"/>
</dbReference>
<dbReference type="Pfam" id="PF07977">
    <property type="entry name" value="FabA"/>
    <property type="match status" value="1"/>
</dbReference>
<dbReference type="SUPFAM" id="SSF54637">
    <property type="entry name" value="Thioesterase/thiol ester dehydrase-isomerase"/>
    <property type="match status" value="1"/>
</dbReference>
<organism>
    <name type="scientific">Azotobacter vinelandii (strain DJ / ATCC BAA-1303)</name>
    <dbReference type="NCBI Taxonomy" id="322710"/>
    <lineage>
        <taxon>Bacteria</taxon>
        <taxon>Pseudomonadati</taxon>
        <taxon>Pseudomonadota</taxon>
        <taxon>Gammaproteobacteria</taxon>
        <taxon>Pseudomonadales</taxon>
        <taxon>Pseudomonadaceae</taxon>
        <taxon>Azotobacter</taxon>
    </lineage>
</organism>
<reference key="1">
    <citation type="journal article" date="2009" name="J. Bacteriol.">
        <title>Genome sequence of Azotobacter vinelandii, an obligate aerobe specialized to support diverse anaerobic metabolic processes.</title>
        <authorList>
            <person name="Setubal J.C."/>
            <person name="Dos Santos P."/>
            <person name="Goldman B.S."/>
            <person name="Ertesvaag H."/>
            <person name="Espin G."/>
            <person name="Rubio L.M."/>
            <person name="Valla S."/>
            <person name="Almeida N.F."/>
            <person name="Balasubramanian D."/>
            <person name="Cromes L."/>
            <person name="Curatti L."/>
            <person name="Du Z."/>
            <person name="Godsy E."/>
            <person name="Goodner B."/>
            <person name="Hellner-Burris K."/>
            <person name="Hernandez J.A."/>
            <person name="Houmiel K."/>
            <person name="Imperial J."/>
            <person name="Kennedy C."/>
            <person name="Larson T.J."/>
            <person name="Latreille P."/>
            <person name="Ligon L.S."/>
            <person name="Lu J."/>
            <person name="Maerk M."/>
            <person name="Miller N.M."/>
            <person name="Norton S."/>
            <person name="O'Carroll I.P."/>
            <person name="Paulsen I."/>
            <person name="Raulfs E.C."/>
            <person name="Roemer R."/>
            <person name="Rosser J."/>
            <person name="Segura D."/>
            <person name="Slater S."/>
            <person name="Stricklin S.L."/>
            <person name="Studholme D.J."/>
            <person name="Sun J."/>
            <person name="Viana C.J."/>
            <person name="Wallin E."/>
            <person name="Wang B."/>
            <person name="Wheeler C."/>
            <person name="Zhu H."/>
            <person name="Dean D.R."/>
            <person name="Dixon R."/>
            <person name="Wood D."/>
        </authorList>
    </citation>
    <scope>NUCLEOTIDE SEQUENCE [LARGE SCALE GENOMIC DNA]</scope>
    <source>
        <strain>DJ / ATCC BAA-1303</strain>
    </source>
</reference>
<comment type="function">
    <text evidence="1">Necessary for the introduction of cis unsaturation into fatty acids. Catalyzes the dehydration of (3R)-3-hydroxydecanoyl-ACP to E-(2)-decenoyl-ACP and then its isomerization to Z-(3)-decenoyl-ACP. Can catalyze the dehydratase reaction for beta-hydroxyacyl-ACPs with saturated chain lengths up to 16:0, being most active on intermediate chain length.</text>
</comment>
<comment type="catalytic activity">
    <reaction evidence="1">
        <text>a (3R)-hydroxyacyl-[ACP] = a (2E)-enoyl-[ACP] + H2O</text>
        <dbReference type="Rhea" id="RHEA:13097"/>
        <dbReference type="Rhea" id="RHEA-COMP:9925"/>
        <dbReference type="Rhea" id="RHEA-COMP:9945"/>
        <dbReference type="ChEBI" id="CHEBI:15377"/>
        <dbReference type="ChEBI" id="CHEBI:78784"/>
        <dbReference type="ChEBI" id="CHEBI:78827"/>
        <dbReference type="EC" id="4.2.1.59"/>
    </reaction>
</comment>
<comment type="catalytic activity">
    <reaction evidence="1">
        <text>(3R)-hydroxydecanoyl-[ACP] = (2E)-decenoyl-[ACP] + H2O</text>
        <dbReference type="Rhea" id="RHEA:41860"/>
        <dbReference type="Rhea" id="RHEA-COMP:9638"/>
        <dbReference type="Rhea" id="RHEA-COMP:9639"/>
        <dbReference type="ChEBI" id="CHEBI:15377"/>
        <dbReference type="ChEBI" id="CHEBI:78466"/>
        <dbReference type="ChEBI" id="CHEBI:78467"/>
    </reaction>
</comment>
<comment type="catalytic activity">
    <reaction evidence="1">
        <text>(2E)-decenoyl-[ACP] = (3Z)-decenoyl-[ACP]</text>
        <dbReference type="Rhea" id="RHEA:23568"/>
        <dbReference type="Rhea" id="RHEA-COMP:9639"/>
        <dbReference type="Rhea" id="RHEA-COMP:9927"/>
        <dbReference type="ChEBI" id="CHEBI:78467"/>
        <dbReference type="ChEBI" id="CHEBI:78798"/>
        <dbReference type="EC" id="5.3.3.14"/>
    </reaction>
</comment>
<comment type="pathway">
    <text evidence="1">Lipid metabolism; fatty acid biosynthesis.</text>
</comment>
<comment type="subunit">
    <text evidence="1">Homodimer.</text>
</comment>
<comment type="subcellular location">
    <subcellularLocation>
        <location evidence="1">Cytoplasm</location>
    </subcellularLocation>
</comment>
<comment type="similarity">
    <text evidence="1">Belongs to the thioester dehydratase family. FabA subfamily.</text>
</comment>
<keyword id="KW-0963">Cytoplasm</keyword>
<keyword id="KW-0275">Fatty acid biosynthesis</keyword>
<keyword id="KW-0276">Fatty acid metabolism</keyword>
<keyword id="KW-0413">Isomerase</keyword>
<keyword id="KW-0444">Lipid biosynthesis</keyword>
<keyword id="KW-0443">Lipid metabolism</keyword>
<keyword id="KW-0456">Lyase</keyword>
<name>FABA_AZOVD</name>
<gene>
    <name evidence="1" type="primary">fabA</name>
    <name type="ordered locus">Avin_29050</name>
</gene>
<proteinExistence type="inferred from homology"/>